<name>RS9_MYCPN</name>
<keyword id="KW-0002">3D-structure</keyword>
<keyword id="KW-1185">Reference proteome</keyword>
<keyword id="KW-0687">Ribonucleoprotein</keyword>
<keyword id="KW-0689">Ribosomal protein</keyword>
<reference key="1">
    <citation type="journal article" date="1996" name="Nucleic Acids Res.">
        <title>Complete sequence analysis of the genome of the bacterium Mycoplasma pneumoniae.</title>
        <authorList>
            <person name="Himmelreich R."/>
            <person name="Hilbert H."/>
            <person name="Plagens H."/>
            <person name="Pirkl E."/>
            <person name="Li B.-C."/>
            <person name="Herrmann R."/>
        </authorList>
    </citation>
    <scope>NUCLEOTIDE SEQUENCE [LARGE SCALE GENOMIC DNA]</scope>
    <source>
        <strain>ATCC 29342 / M129 / Subtype 1</strain>
    </source>
</reference>
<gene>
    <name type="primary">rpsI</name>
    <name type="ordered locus">MPN_616</name>
    <name type="ORF">MP226</name>
</gene>
<comment type="similarity">
    <text evidence="1">Belongs to the universal ribosomal protein uS9 family.</text>
</comment>
<proteinExistence type="evidence at protein level"/>
<organism>
    <name type="scientific">Mycoplasma pneumoniae (strain ATCC 29342 / M129 / Subtype 1)</name>
    <name type="common">Mycoplasmoides pneumoniae</name>
    <dbReference type="NCBI Taxonomy" id="272634"/>
    <lineage>
        <taxon>Bacteria</taxon>
        <taxon>Bacillati</taxon>
        <taxon>Mycoplasmatota</taxon>
        <taxon>Mycoplasmoidales</taxon>
        <taxon>Mycoplasmoidaceae</taxon>
        <taxon>Mycoplasmoides</taxon>
    </lineage>
</organism>
<protein>
    <recommendedName>
        <fullName evidence="1">Small ribosomal subunit protein uS9</fullName>
    </recommendedName>
    <alternativeName>
        <fullName>30S ribosomal protein S9</fullName>
    </alternativeName>
</protein>
<sequence>MEKQSYYGLGRRKSSSAKVYLTPTQDKGKITVNRRDPSEYFPNKLVIQDMEQPLDLTDLKKNFDINVVVKGGGFTGQAGAIRLGIVRALLQFNPELKKILKSKKLTTRDKRVKERKKFGLYGARRAPQFTKR</sequence>
<accession>P75179</accession>
<evidence type="ECO:0000305" key="1"/>
<evidence type="ECO:0007829" key="2">
    <source>
        <dbReference type="PDB" id="8P6P"/>
    </source>
</evidence>
<feature type="chain" id="PRO_0000111377" description="Small ribosomal subunit protein uS9">
    <location>
        <begin position="1"/>
        <end position="132"/>
    </location>
</feature>
<feature type="strand" evidence="2">
    <location>
        <begin position="6"/>
        <end position="14"/>
    </location>
</feature>
<feature type="strand" evidence="2">
    <location>
        <begin position="16"/>
        <end position="22"/>
    </location>
</feature>
<feature type="helix" evidence="2">
    <location>
        <begin position="37"/>
        <end position="40"/>
    </location>
</feature>
<feature type="helix" evidence="2">
    <location>
        <begin position="46"/>
        <end position="55"/>
    </location>
</feature>
<feature type="strand" evidence="2">
    <location>
        <begin position="64"/>
        <end position="72"/>
    </location>
</feature>
<feature type="helix" evidence="2">
    <location>
        <begin position="75"/>
        <end position="89"/>
    </location>
</feature>
<feature type="helix" evidence="2">
    <location>
        <begin position="96"/>
        <end position="103"/>
    </location>
</feature>
<feature type="strand" evidence="2">
    <location>
        <begin position="120"/>
        <end position="124"/>
    </location>
</feature>
<dbReference type="EMBL" id="U00089">
    <property type="protein sequence ID" value="AAB95874.1"/>
    <property type="molecule type" value="Genomic_DNA"/>
</dbReference>
<dbReference type="PIR" id="S73552">
    <property type="entry name" value="S73552"/>
</dbReference>
<dbReference type="RefSeq" id="NP_110305.1">
    <property type="nucleotide sequence ID" value="NC_000912.1"/>
</dbReference>
<dbReference type="RefSeq" id="WP_010874973.1">
    <property type="nucleotide sequence ID" value="NZ_OU342337.1"/>
</dbReference>
<dbReference type="PDB" id="7OOC">
    <property type="method" value="EM"/>
    <property type="resolution" value="3.70 A"/>
    <property type="chains" value="H=1-132"/>
</dbReference>
<dbReference type="PDB" id="7P6Z">
    <property type="method" value="EM"/>
    <property type="resolution" value="3.50 A"/>
    <property type="chains" value="H=1-132"/>
</dbReference>
<dbReference type="PDB" id="7PAH">
    <property type="method" value="EM"/>
    <property type="resolution" value="9.50 A"/>
    <property type="chains" value="H=1-132"/>
</dbReference>
<dbReference type="PDB" id="7PAI">
    <property type="method" value="EM"/>
    <property type="resolution" value="6.70 A"/>
    <property type="chains" value="H=1-132"/>
</dbReference>
<dbReference type="PDB" id="7PAJ">
    <property type="method" value="EM"/>
    <property type="resolution" value="7.30 A"/>
    <property type="chains" value="H=1-132"/>
</dbReference>
<dbReference type="PDB" id="7PAK">
    <property type="method" value="EM"/>
    <property type="resolution" value="5.30 A"/>
    <property type="chains" value="H=1-132"/>
</dbReference>
<dbReference type="PDB" id="7PAL">
    <property type="method" value="EM"/>
    <property type="resolution" value="4.70 A"/>
    <property type="chains" value="H=1-132"/>
</dbReference>
<dbReference type="PDB" id="7PAM">
    <property type="method" value="EM"/>
    <property type="resolution" value="6.80 A"/>
    <property type="chains" value="H=1-132"/>
</dbReference>
<dbReference type="PDB" id="7PAN">
    <property type="method" value="EM"/>
    <property type="resolution" value="9.70 A"/>
    <property type="chains" value="H=1-132"/>
</dbReference>
<dbReference type="PDB" id="7PAO">
    <property type="method" value="EM"/>
    <property type="resolution" value="7.00 A"/>
    <property type="chains" value="H=1-132"/>
</dbReference>
<dbReference type="PDB" id="7PAQ">
    <property type="method" value="EM"/>
    <property type="resolution" value="8.90 A"/>
    <property type="chains" value="H=1-132"/>
</dbReference>
<dbReference type="PDB" id="7PAR">
    <property type="method" value="EM"/>
    <property type="resolution" value="8.20 A"/>
    <property type="chains" value="H=1-132"/>
</dbReference>
<dbReference type="PDB" id="7PAS">
    <property type="method" value="EM"/>
    <property type="resolution" value="16.00 A"/>
    <property type="chains" value="H=1-132"/>
</dbReference>
<dbReference type="PDB" id="7PH9">
    <property type="method" value="EM"/>
    <property type="resolution" value="8.70 A"/>
    <property type="chains" value="H=1-132"/>
</dbReference>
<dbReference type="PDB" id="7PHA">
    <property type="method" value="EM"/>
    <property type="resolution" value="8.50 A"/>
    <property type="chains" value="H=1-132"/>
</dbReference>
<dbReference type="PDB" id="7PHB">
    <property type="method" value="EM"/>
    <property type="resolution" value="4.90 A"/>
    <property type="chains" value="H=1-132"/>
</dbReference>
<dbReference type="PDB" id="7PHC">
    <property type="method" value="EM"/>
    <property type="resolution" value="9.90 A"/>
    <property type="chains" value="H=1-132"/>
</dbReference>
<dbReference type="PDB" id="7PI8">
    <property type="method" value="EM"/>
    <property type="resolution" value="8.90 A"/>
    <property type="chains" value="H=1-132"/>
</dbReference>
<dbReference type="PDB" id="7PI9">
    <property type="method" value="EM"/>
    <property type="resolution" value="6.30 A"/>
    <property type="chains" value="H=1-132"/>
</dbReference>
<dbReference type="PDB" id="7PIA">
    <property type="method" value="EM"/>
    <property type="resolution" value="13.60 A"/>
    <property type="chains" value="H=1-132"/>
</dbReference>
<dbReference type="PDB" id="7PIB">
    <property type="method" value="EM"/>
    <property type="resolution" value="4.70 A"/>
    <property type="chains" value="H=1-132"/>
</dbReference>
<dbReference type="PDB" id="7PIC">
    <property type="method" value="EM"/>
    <property type="resolution" value="9.10 A"/>
    <property type="chains" value="H=1-132"/>
</dbReference>
<dbReference type="PDB" id="7PIO">
    <property type="method" value="EM"/>
    <property type="resolution" value="9.50 A"/>
    <property type="chains" value="H=1-132"/>
</dbReference>
<dbReference type="PDB" id="7PIP">
    <property type="method" value="EM"/>
    <property type="resolution" value="9.30 A"/>
    <property type="chains" value="H=1-132"/>
</dbReference>
<dbReference type="PDB" id="7PIQ">
    <property type="method" value="EM"/>
    <property type="resolution" value="9.70 A"/>
    <property type="chains" value="H=1-132"/>
</dbReference>
<dbReference type="PDB" id="7PIR">
    <property type="method" value="EM"/>
    <property type="resolution" value="12.10 A"/>
    <property type="chains" value="H=1-132"/>
</dbReference>
<dbReference type="PDB" id="7PIS">
    <property type="method" value="EM"/>
    <property type="resolution" value="15.00 A"/>
    <property type="chains" value="H=1-132"/>
</dbReference>
<dbReference type="PDB" id="7PIT">
    <property type="method" value="EM"/>
    <property type="resolution" value="5.70 A"/>
    <property type="chains" value="H=1-132"/>
</dbReference>
<dbReference type="PDB" id="8P6P">
    <property type="method" value="EM"/>
    <property type="resolution" value="3.20 A"/>
    <property type="chains" value="H=1-132"/>
</dbReference>
<dbReference type="PDB" id="8P7X">
    <property type="method" value="EM"/>
    <property type="resolution" value="3.03 A"/>
    <property type="chains" value="H=1-132"/>
</dbReference>
<dbReference type="PDB" id="8P7Y">
    <property type="method" value="EM"/>
    <property type="resolution" value="3.70 A"/>
    <property type="chains" value="H=1-132"/>
</dbReference>
<dbReference type="PDB" id="8P8V">
    <property type="method" value="EM"/>
    <property type="resolution" value="8.70 A"/>
    <property type="chains" value="H=1-132"/>
</dbReference>
<dbReference type="PDB" id="8P8W">
    <property type="method" value="EM"/>
    <property type="resolution" value="8.70 A"/>
    <property type="chains" value="H=1-132"/>
</dbReference>
<dbReference type="PDBsum" id="7OOC"/>
<dbReference type="PDBsum" id="7P6Z"/>
<dbReference type="PDBsum" id="7PAH"/>
<dbReference type="PDBsum" id="7PAI"/>
<dbReference type="PDBsum" id="7PAJ"/>
<dbReference type="PDBsum" id="7PAK"/>
<dbReference type="PDBsum" id="7PAL"/>
<dbReference type="PDBsum" id="7PAM"/>
<dbReference type="PDBsum" id="7PAN"/>
<dbReference type="PDBsum" id="7PAO"/>
<dbReference type="PDBsum" id="7PAQ"/>
<dbReference type="PDBsum" id="7PAR"/>
<dbReference type="PDBsum" id="7PAS"/>
<dbReference type="PDBsum" id="7PH9"/>
<dbReference type="PDBsum" id="7PHA"/>
<dbReference type="PDBsum" id="7PHB"/>
<dbReference type="PDBsum" id="7PHC"/>
<dbReference type="PDBsum" id="7PI8"/>
<dbReference type="PDBsum" id="7PI9"/>
<dbReference type="PDBsum" id="7PIA"/>
<dbReference type="PDBsum" id="7PIB"/>
<dbReference type="PDBsum" id="7PIC"/>
<dbReference type="PDBsum" id="7PIO"/>
<dbReference type="PDBsum" id="7PIP"/>
<dbReference type="PDBsum" id="7PIQ"/>
<dbReference type="PDBsum" id="7PIR"/>
<dbReference type="PDBsum" id="7PIS"/>
<dbReference type="PDBsum" id="7PIT"/>
<dbReference type="PDBsum" id="8P6P"/>
<dbReference type="PDBsum" id="8P7X"/>
<dbReference type="PDBsum" id="8P7Y"/>
<dbReference type="PDBsum" id="8P8V"/>
<dbReference type="PDBsum" id="8P8W"/>
<dbReference type="EMDB" id="EMD-13234"/>
<dbReference type="EMDB" id="EMD-13272"/>
<dbReference type="EMDB" id="EMD-13273"/>
<dbReference type="EMDB" id="EMD-13274"/>
<dbReference type="EMDB" id="EMD-13275"/>
<dbReference type="EMDB" id="EMD-13276"/>
<dbReference type="EMDB" id="EMD-13277"/>
<dbReference type="EMDB" id="EMD-13278"/>
<dbReference type="EMDB" id="EMD-13279"/>
<dbReference type="EMDB" id="EMD-13280"/>
<dbReference type="EMDB" id="EMD-13281"/>
<dbReference type="EMDB" id="EMD-13282"/>
<dbReference type="EMDB" id="EMD-13410"/>
<dbReference type="EMDB" id="EMD-13411"/>
<dbReference type="EMDB" id="EMD-13412"/>
<dbReference type="EMDB" id="EMD-13413"/>
<dbReference type="EMDB" id="EMD-13432"/>
<dbReference type="EMDB" id="EMD-13433"/>
<dbReference type="EMDB" id="EMD-13434"/>
<dbReference type="EMDB" id="EMD-13435"/>
<dbReference type="EMDB" id="EMD-13436"/>
<dbReference type="EMDB" id="EMD-13445"/>
<dbReference type="EMDB" id="EMD-13446"/>
<dbReference type="EMDB" id="EMD-13447"/>
<dbReference type="EMDB" id="EMD-13448"/>
<dbReference type="EMDB" id="EMD-13449"/>
<dbReference type="EMDB" id="EMD-13450"/>
<dbReference type="SMR" id="P75179"/>
<dbReference type="IntAct" id="P75179">
    <property type="interactions" value="2"/>
</dbReference>
<dbReference type="STRING" id="272634.MPN_616"/>
<dbReference type="EnsemblBacteria" id="AAB95874">
    <property type="protein sequence ID" value="AAB95874"/>
    <property type="gene ID" value="MPN_616"/>
</dbReference>
<dbReference type="KEGG" id="mpn:MPN_616"/>
<dbReference type="PATRIC" id="fig|272634.6.peg.680"/>
<dbReference type="HOGENOM" id="CLU_046483_2_1_14"/>
<dbReference type="OrthoDB" id="9803965at2"/>
<dbReference type="BioCyc" id="MPNE272634:G1GJ3-994-MONOMER"/>
<dbReference type="Proteomes" id="UP000000808">
    <property type="component" value="Chromosome"/>
</dbReference>
<dbReference type="GO" id="GO:0022627">
    <property type="term" value="C:cytosolic small ribosomal subunit"/>
    <property type="evidence" value="ECO:0007669"/>
    <property type="project" value="TreeGrafter"/>
</dbReference>
<dbReference type="GO" id="GO:0003723">
    <property type="term" value="F:RNA binding"/>
    <property type="evidence" value="ECO:0007669"/>
    <property type="project" value="TreeGrafter"/>
</dbReference>
<dbReference type="GO" id="GO:0003735">
    <property type="term" value="F:structural constituent of ribosome"/>
    <property type="evidence" value="ECO:0007669"/>
    <property type="project" value="InterPro"/>
</dbReference>
<dbReference type="GO" id="GO:0006412">
    <property type="term" value="P:translation"/>
    <property type="evidence" value="ECO:0007669"/>
    <property type="project" value="UniProtKB-UniRule"/>
</dbReference>
<dbReference type="FunFam" id="3.30.230.10:FF:000001">
    <property type="entry name" value="30S ribosomal protein S9"/>
    <property type="match status" value="1"/>
</dbReference>
<dbReference type="Gene3D" id="3.30.230.10">
    <property type="match status" value="1"/>
</dbReference>
<dbReference type="HAMAP" id="MF_00532_B">
    <property type="entry name" value="Ribosomal_uS9_B"/>
    <property type="match status" value="1"/>
</dbReference>
<dbReference type="InterPro" id="IPR020568">
    <property type="entry name" value="Ribosomal_Su5_D2-typ_SF"/>
</dbReference>
<dbReference type="InterPro" id="IPR000754">
    <property type="entry name" value="Ribosomal_uS9"/>
</dbReference>
<dbReference type="InterPro" id="IPR023035">
    <property type="entry name" value="Ribosomal_uS9_bac/plastid"/>
</dbReference>
<dbReference type="InterPro" id="IPR020574">
    <property type="entry name" value="Ribosomal_uS9_CS"/>
</dbReference>
<dbReference type="InterPro" id="IPR014721">
    <property type="entry name" value="Ribsml_uS5_D2-typ_fold_subgr"/>
</dbReference>
<dbReference type="NCBIfam" id="NF001099">
    <property type="entry name" value="PRK00132.1"/>
    <property type="match status" value="1"/>
</dbReference>
<dbReference type="PANTHER" id="PTHR21569">
    <property type="entry name" value="RIBOSOMAL PROTEIN S9"/>
    <property type="match status" value="1"/>
</dbReference>
<dbReference type="PANTHER" id="PTHR21569:SF1">
    <property type="entry name" value="SMALL RIBOSOMAL SUBUNIT PROTEIN US9M"/>
    <property type="match status" value="1"/>
</dbReference>
<dbReference type="Pfam" id="PF00380">
    <property type="entry name" value="Ribosomal_S9"/>
    <property type="match status" value="1"/>
</dbReference>
<dbReference type="SUPFAM" id="SSF54211">
    <property type="entry name" value="Ribosomal protein S5 domain 2-like"/>
    <property type="match status" value="1"/>
</dbReference>
<dbReference type="PROSITE" id="PS00360">
    <property type="entry name" value="RIBOSOMAL_S9"/>
    <property type="match status" value="1"/>
</dbReference>